<comment type="function">
    <text evidence="1 2">Involved in bacterial cell envelope homeostasis. Regulates peptidoglycan processing by N-acetylglucosaminidase SagB, perhaps acting as a scaffold protein. Pleiotropic regulator of gene expression, probably acting via interactions with multiple two-component systems (By similarity). Plays a role in the abundant deposition of the immunoglobulin G-binding protein A (spa) at the cross-wall, a subcellular structure that initially arises from cytokinesis (By similarity).</text>
</comment>
<comment type="subunit">
    <text evidence="2">Interacts with N-acetylglucosaminidase SagB; interaction is direct and facilitates peptidoglycan processing. Interacts (via N-terminal region including transmembrane domains) with sensor protein kinase WalK (via N-terminal region including transmembrane domains). Interacts (via N-terminal region including transmembrane domains) with sensor protein kinase SaeS. Interacts with other histidine kinases, perhaps via their transmembrane domains.</text>
</comment>
<comment type="subcellular location">
    <subcellularLocation>
        <location evidence="2">Cell membrane</location>
        <topology evidence="2">Multi-pass membrane protein</topology>
    </subcellularLocation>
    <subcellularLocation>
        <location evidence="1">Secreted</location>
        <location evidence="1">Cell wall</location>
    </subcellularLocation>
    <subcellularLocation>
        <location evidence="2">Cell septum</location>
    </subcellularLocation>
    <text evidence="1">Localization to the cross-wall is enriched in dividing cells.</text>
</comment>
<comment type="domain">
    <text evidence="2">C-terminal region not involved in glucosaminidase activity of the SagB-SpdC/LyrA complex.</text>
</comment>
<comment type="similarity">
    <text evidence="5">Belongs to the LyrA family.</text>
</comment>
<evidence type="ECO:0000250" key="1">
    <source>
        <dbReference type="UniProtKB" id="A0A0H3KA40"/>
    </source>
</evidence>
<evidence type="ECO:0000250" key="2">
    <source>
        <dbReference type="UniProtKB" id="Q2FVT1"/>
    </source>
</evidence>
<evidence type="ECO:0000255" key="3"/>
<evidence type="ECO:0000256" key="4">
    <source>
        <dbReference type="SAM" id="MobiDB-lite"/>
    </source>
</evidence>
<evidence type="ECO:0000305" key="5"/>
<reference key="1">
    <citation type="journal article" date="2002" name="Lancet">
        <title>Genome and virulence determinants of high virulence community-acquired MRSA.</title>
        <authorList>
            <person name="Baba T."/>
            <person name="Takeuchi F."/>
            <person name="Kuroda M."/>
            <person name="Yuzawa H."/>
            <person name="Aoki K."/>
            <person name="Oguchi A."/>
            <person name="Nagai Y."/>
            <person name="Iwama N."/>
            <person name="Asano K."/>
            <person name="Naimi T."/>
            <person name="Kuroda H."/>
            <person name="Cui L."/>
            <person name="Yamamoto K."/>
            <person name="Hiramatsu K."/>
        </authorList>
    </citation>
    <scope>NUCLEOTIDE SEQUENCE [LARGE SCALE GENOMIC DNA]</scope>
    <source>
        <strain>MW2</strain>
    </source>
</reference>
<dbReference type="EMBL" id="BA000033">
    <property type="protein sequence ID" value="BAB96120.1"/>
    <property type="molecule type" value="Genomic_DNA"/>
</dbReference>
<dbReference type="RefSeq" id="WP_000794442.1">
    <property type="nucleotide sequence ID" value="NC_003923.1"/>
</dbReference>
<dbReference type="SMR" id="Q7A047"/>
<dbReference type="KEGG" id="sam:MW2255"/>
<dbReference type="HOGENOM" id="CLU_046135_0_0_9"/>
<dbReference type="GO" id="GO:0005886">
    <property type="term" value="C:plasma membrane"/>
    <property type="evidence" value="ECO:0007669"/>
    <property type="project" value="UniProtKB-SubCell"/>
</dbReference>
<dbReference type="GO" id="GO:0004175">
    <property type="term" value="F:endopeptidase activity"/>
    <property type="evidence" value="ECO:0007669"/>
    <property type="project" value="UniProtKB-ARBA"/>
</dbReference>
<dbReference type="GO" id="GO:0080120">
    <property type="term" value="P:CAAX-box protein maturation"/>
    <property type="evidence" value="ECO:0007669"/>
    <property type="project" value="UniProtKB-ARBA"/>
</dbReference>
<dbReference type="InterPro" id="IPR003675">
    <property type="entry name" value="Rce1/LyrA-like_dom"/>
</dbReference>
<dbReference type="Pfam" id="PF02517">
    <property type="entry name" value="Rce1-like"/>
    <property type="match status" value="1"/>
</dbReference>
<accession>Q7A047</accession>
<feature type="chain" id="PRO_0000274825" description="Lysostaphin resistance protein A">
    <location>
        <begin position="1"/>
        <end position="419"/>
    </location>
</feature>
<feature type="transmembrane region" description="Helical" evidence="3">
    <location>
        <begin position="9"/>
        <end position="29"/>
    </location>
</feature>
<feature type="transmembrane region" description="Helical" evidence="3">
    <location>
        <begin position="41"/>
        <end position="61"/>
    </location>
</feature>
<feature type="transmembrane region" description="Helical" evidence="3">
    <location>
        <begin position="84"/>
        <end position="104"/>
    </location>
</feature>
<feature type="transmembrane region" description="Helical" evidence="3">
    <location>
        <begin position="118"/>
        <end position="138"/>
    </location>
</feature>
<feature type="transmembrane region" description="Helical" evidence="3">
    <location>
        <begin position="153"/>
        <end position="173"/>
    </location>
</feature>
<feature type="transmembrane region" description="Helical" evidence="3">
    <location>
        <begin position="175"/>
        <end position="195"/>
    </location>
</feature>
<feature type="transmembrane region" description="Helical" evidence="3">
    <location>
        <begin position="202"/>
        <end position="222"/>
    </location>
</feature>
<feature type="transmembrane region" description="Helical" evidence="3">
    <location>
        <begin position="231"/>
        <end position="251"/>
    </location>
</feature>
<feature type="region of interest" description="Disordered" evidence="4">
    <location>
        <begin position="273"/>
        <end position="419"/>
    </location>
</feature>
<feature type="compositionally biased region" description="Basic and acidic residues" evidence="4">
    <location>
        <begin position="282"/>
        <end position="299"/>
    </location>
</feature>
<feature type="compositionally biased region" description="Basic and acidic residues" evidence="4">
    <location>
        <begin position="323"/>
        <end position="336"/>
    </location>
</feature>
<feature type="compositionally biased region" description="Basic and acidic residues" evidence="4">
    <location>
        <begin position="344"/>
        <end position="353"/>
    </location>
</feature>
<feature type="compositionally biased region" description="Acidic residues" evidence="4">
    <location>
        <begin position="372"/>
        <end position="382"/>
    </location>
</feature>
<feature type="compositionally biased region" description="Basic and acidic residues" evidence="4">
    <location>
        <begin position="383"/>
        <end position="419"/>
    </location>
</feature>
<gene>
    <name type="primary">lyrA</name>
    <name evidence="1" type="synonym">spdC</name>
    <name type="ordered locus">MW2255</name>
</gene>
<proteinExistence type="inferred from homology"/>
<keyword id="KW-1003">Cell membrane</keyword>
<keyword id="KW-0134">Cell wall</keyword>
<keyword id="KW-0472">Membrane</keyword>
<keyword id="KW-0964">Secreted</keyword>
<keyword id="KW-0812">Transmembrane</keyword>
<keyword id="KW-1133">Transmembrane helix</keyword>
<protein>
    <recommendedName>
        <fullName>Lysostaphin resistance protein A</fullName>
    </recommendedName>
    <alternativeName>
        <fullName evidence="1">Surface protein display C</fullName>
    </alternativeName>
</protein>
<name>LYRA_STAAW</name>
<organism>
    <name type="scientific">Staphylococcus aureus (strain MW2)</name>
    <dbReference type="NCBI Taxonomy" id="196620"/>
    <lineage>
        <taxon>Bacteria</taxon>
        <taxon>Bacillati</taxon>
        <taxon>Bacillota</taxon>
        <taxon>Bacilli</taxon>
        <taxon>Bacillales</taxon>
        <taxon>Staphylococcaceae</taxon>
        <taxon>Staphylococcus</taxon>
    </lineage>
</organism>
<sequence length="419" mass="46785">MKNNKISGFQWAMTIFVFFVITMALSIMLRDFQSIIGVKHFIFEVTDLAPLIAAIICILVFKYKKVQLAGLKFSISLKVIERLLLALILPLIILIIGMYSFNTFADSFILLQSTGLSVPITHILIGHILMAFVVEFGFRSYLQNIVETKMNTFFASIVVGLMYSVFSANTTYGTEFAAYNFLYTFSFSMILGELIRATKGRTIYIATTFHASMTFGLIFLFSEEIGDLFSIKVIAISTAIVAVGYIGLSLIIRGIAYLTTRRNLEELEPNNYLDHVNDDEETNHTEAEKSSSNIKDAEKTGVATASTVGVAKNDTENTVADEPSIHEGTEKTEPQHHIGNQTESNHDEDHDITSESVESAESVKQAPQSDDLTNDSNEDEIEQSLKEPATYKEDRRSSVVIDAEKHIEKTEEQSSDKNK</sequence>